<dbReference type="EMBL" id="AE016827">
    <property type="protein sequence ID" value="AAU37878.1"/>
    <property type="molecule type" value="Genomic_DNA"/>
</dbReference>
<dbReference type="RefSeq" id="WP_011200445.1">
    <property type="nucleotide sequence ID" value="NC_006300.1"/>
</dbReference>
<dbReference type="SMR" id="Q65T32"/>
<dbReference type="STRING" id="221988.MS1271"/>
<dbReference type="KEGG" id="msu:MS1271"/>
<dbReference type="eggNOG" id="COG1380">
    <property type="taxonomic scope" value="Bacteria"/>
</dbReference>
<dbReference type="HOGENOM" id="CLU_113736_1_1_6"/>
<dbReference type="OrthoDB" id="385012at2"/>
<dbReference type="Proteomes" id="UP000000607">
    <property type="component" value="Chromosome"/>
</dbReference>
<dbReference type="GO" id="GO:0005886">
    <property type="term" value="C:plasma membrane"/>
    <property type="evidence" value="ECO:0007669"/>
    <property type="project" value="UniProtKB-SubCell"/>
</dbReference>
<dbReference type="HAMAP" id="MF_01144">
    <property type="entry name" value="UPF0299"/>
    <property type="match status" value="1"/>
</dbReference>
<dbReference type="InterPro" id="IPR005538">
    <property type="entry name" value="LrgA/CidA"/>
</dbReference>
<dbReference type="InterPro" id="IPR022957">
    <property type="entry name" value="Uncharacterised_UPF0299"/>
</dbReference>
<dbReference type="NCBIfam" id="NF002494">
    <property type="entry name" value="PRK01821.1"/>
    <property type="match status" value="1"/>
</dbReference>
<dbReference type="PANTHER" id="PTHR33931">
    <property type="entry name" value="HOLIN-LIKE PROTEIN CIDA-RELATED"/>
    <property type="match status" value="1"/>
</dbReference>
<dbReference type="PANTHER" id="PTHR33931:SF5">
    <property type="entry name" value="UPF0299 MEMBRANE PROTEIN YOHJ"/>
    <property type="match status" value="1"/>
</dbReference>
<dbReference type="Pfam" id="PF03788">
    <property type="entry name" value="LrgA"/>
    <property type="match status" value="1"/>
</dbReference>
<name>Y1271_MANSM</name>
<protein>
    <recommendedName>
        <fullName evidence="1">UPF0299 membrane protein MS1271</fullName>
    </recommendedName>
</protein>
<sequence length="144" mass="16007">MRQKIFLFVRSLIILYLILFIGEGIAKLIPIGIPGSIFGLLILFIGLTTQIIKVDWVFFGASLLIRYMAVLFVPVSVGVMKYSDLLVSHASSLLIPNIVSTCVTLLVIGFLGDYLFSLNSFTRLRKKAIKKRDINNVNNKGEAS</sequence>
<proteinExistence type="inferred from homology"/>
<accession>Q65T32</accession>
<reference key="1">
    <citation type="journal article" date="2004" name="Nat. Biotechnol.">
        <title>The genome sequence of the capnophilic rumen bacterium Mannheimia succiniciproducens.</title>
        <authorList>
            <person name="Hong S.H."/>
            <person name="Kim J.S."/>
            <person name="Lee S.Y."/>
            <person name="In Y.H."/>
            <person name="Choi S.S."/>
            <person name="Rih J.-K."/>
            <person name="Kim C.H."/>
            <person name="Jeong H."/>
            <person name="Hur C.G."/>
            <person name="Kim J.J."/>
        </authorList>
    </citation>
    <scope>NUCLEOTIDE SEQUENCE [LARGE SCALE GENOMIC DNA]</scope>
    <source>
        <strain>KCTC 0769BP / MBEL55E</strain>
    </source>
</reference>
<feature type="chain" id="PRO_1000065462" description="UPF0299 membrane protein MS1271">
    <location>
        <begin position="1"/>
        <end position="144"/>
    </location>
</feature>
<feature type="transmembrane region" description="Helical" evidence="1">
    <location>
        <begin position="5"/>
        <end position="25"/>
    </location>
</feature>
<feature type="transmembrane region" description="Helical" evidence="1">
    <location>
        <begin position="28"/>
        <end position="48"/>
    </location>
</feature>
<feature type="transmembrane region" description="Helical" evidence="1">
    <location>
        <begin position="57"/>
        <end position="77"/>
    </location>
</feature>
<feature type="transmembrane region" description="Helical" evidence="1">
    <location>
        <begin position="92"/>
        <end position="112"/>
    </location>
</feature>
<organism>
    <name type="scientific">Mannheimia succiniciproducens (strain KCTC 0769BP / MBEL55E)</name>
    <dbReference type="NCBI Taxonomy" id="221988"/>
    <lineage>
        <taxon>Bacteria</taxon>
        <taxon>Pseudomonadati</taxon>
        <taxon>Pseudomonadota</taxon>
        <taxon>Gammaproteobacteria</taxon>
        <taxon>Pasteurellales</taxon>
        <taxon>Pasteurellaceae</taxon>
        <taxon>Basfia</taxon>
    </lineage>
</organism>
<comment type="subcellular location">
    <subcellularLocation>
        <location evidence="1">Cell inner membrane</location>
        <topology evidence="1">Multi-pass membrane protein</topology>
    </subcellularLocation>
</comment>
<comment type="similarity">
    <text evidence="1">Belongs to the UPF0299 family.</text>
</comment>
<gene>
    <name type="ordered locus">MS1271</name>
</gene>
<keyword id="KW-0997">Cell inner membrane</keyword>
<keyword id="KW-1003">Cell membrane</keyword>
<keyword id="KW-0472">Membrane</keyword>
<keyword id="KW-0812">Transmembrane</keyword>
<keyword id="KW-1133">Transmembrane helix</keyword>
<evidence type="ECO:0000255" key="1">
    <source>
        <dbReference type="HAMAP-Rule" id="MF_01144"/>
    </source>
</evidence>